<organism>
    <name type="scientific">Colletotrichum lindemuthianum</name>
    <name type="common">Bean anthracnose fungus</name>
    <name type="synonym">Glomerella lindemuthiana</name>
    <dbReference type="NCBI Taxonomy" id="290576"/>
    <lineage>
        <taxon>Eukaryota</taxon>
        <taxon>Fungi</taxon>
        <taxon>Dikarya</taxon>
        <taxon>Ascomycota</taxon>
        <taxon>Pezizomycotina</taxon>
        <taxon>Sordariomycetes</taxon>
        <taxon>Hypocreomycetidae</taxon>
        <taxon>Glomerellales</taxon>
        <taxon>Glomerellaceae</taxon>
        <taxon>Colletotrichum</taxon>
        <taxon>Colletotrichum orbiculare species complex</taxon>
    </lineage>
</organism>
<protein>
    <recommendedName>
        <fullName>Autophagy-related protein 8</fullName>
    </recommendedName>
    <alternativeName>
        <fullName>Autophagy-related ubiquitin-like modifier ATG8</fullName>
    </alternativeName>
</protein>
<reference key="1">
    <citation type="submission" date="2007-03" db="EMBL/GenBank/DDBJ databases">
        <title>Involvement of autophagy in the appressorium functionality of the fungal plant pathogen Colletotrichum lindemuthianum.</title>
        <authorList>
            <person name="Charoin-Bard E."/>
            <person name="Lauge R."/>
            <person name="Langin T."/>
        </authorList>
    </citation>
    <scope>NUCLEOTIDE SEQUENCE [GENOMIC DNA]</scope>
</reference>
<sequence>MRSKFKDEHPFEKRKAEAERIRQKYSDRIPVICEKVEKSDIATIDKKKYLVPADLTVGQFVYVIRKRIKLSPEKAIFIFVDEVLPPTAALMSSIYEEHKDEDGFLYITYSGENTFGGFETA</sequence>
<evidence type="ECO:0000250" key="1">
    <source>
        <dbReference type="UniProtKB" id="P38182"/>
    </source>
</evidence>
<evidence type="ECO:0000305" key="2"/>
<name>ATG8_COLLN</name>
<proteinExistence type="inferred from homology"/>
<feature type="chain" id="PRO_0000317888" description="Autophagy-related protein 8">
    <location>
        <begin position="1"/>
        <end position="116"/>
    </location>
</feature>
<feature type="propeptide" id="PRO_0000317889" description="Removed in mature form" evidence="1">
    <location>
        <begin position="117"/>
        <end position="121"/>
    </location>
</feature>
<feature type="site" description="Cleavage; by ATG4" evidence="1">
    <location>
        <begin position="116"/>
        <end position="117"/>
    </location>
</feature>
<feature type="lipid moiety-binding region" description="Phosphatidylethanolamine amidated glycine" evidence="1">
    <location>
        <position position="116"/>
    </location>
</feature>
<dbReference type="EMBL" id="EF467326">
    <property type="protein sequence ID" value="ABO46011.1"/>
    <property type="molecule type" value="Genomic_DNA"/>
</dbReference>
<dbReference type="SMR" id="A4LA70"/>
<dbReference type="GO" id="GO:0000421">
    <property type="term" value="C:autophagosome membrane"/>
    <property type="evidence" value="ECO:0007669"/>
    <property type="project" value="UniProtKB-SubCell"/>
</dbReference>
<dbReference type="GO" id="GO:0031410">
    <property type="term" value="C:cytoplasmic vesicle"/>
    <property type="evidence" value="ECO:0007669"/>
    <property type="project" value="UniProtKB-KW"/>
</dbReference>
<dbReference type="GO" id="GO:0006914">
    <property type="term" value="P:autophagy"/>
    <property type="evidence" value="ECO:0007669"/>
    <property type="project" value="UniProtKB-KW"/>
</dbReference>
<dbReference type="GO" id="GO:0015031">
    <property type="term" value="P:protein transport"/>
    <property type="evidence" value="ECO:0007669"/>
    <property type="project" value="UniProtKB-KW"/>
</dbReference>
<dbReference type="CDD" id="cd16128">
    <property type="entry name" value="Ubl_ATG8"/>
    <property type="match status" value="1"/>
</dbReference>
<dbReference type="FunFam" id="3.10.20.90:FF:000010">
    <property type="entry name" value="Autophagy-related protein"/>
    <property type="match status" value="1"/>
</dbReference>
<dbReference type="Gene3D" id="3.10.20.90">
    <property type="entry name" value="Phosphatidylinositol 3-kinase Catalytic Subunit, Chain A, domain 1"/>
    <property type="match status" value="1"/>
</dbReference>
<dbReference type="InterPro" id="IPR004241">
    <property type="entry name" value="Atg8-like"/>
</dbReference>
<dbReference type="InterPro" id="IPR029071">
    <property type="entry name" value="Ubiquitin-like_domsf"/>
</dbReference>
<dbReference type="PANTHER" id="PTHR10969">
    <property type="entry name" value="MICROTUBULE-ASSOCIATED PROTEINS 1A/1B LIGHT CHAIN 3-RELATED"/>
    <property type="match status" value="1"/>
</dbReference>
<dbReference type="Pfam" id="PF02991">
    <property type="entry name" value="ATG8"/>
    <property type="match status" value="1"/>
</dbReference>
<dbReference type="SUPFAM" id="SSF54236">
    <property type="entry name" value="Ubiquitin-like"/>
    <property type="match status" value="1"/>
</dbReference>
<comment type="function">
    <text evidence="1">Ubiquitin-like modifier involved in autophagosome formation. With ATG4, mediates the delivery of the autophagosomes to the vacuole via the microtubule cytoskeleton. Required for selective autophagic degradation of the nucleus (nucleophagy) as well as for mitophagy which contributes to regulate mitochondrial quantity and quality by eliminating the mitochondria to a basal level to fulfill cellular energy requirements and preventing excess ROS production. Participates also in membrane fusion events that take place in the early secretory pathway. Also involved in endoplasmic reticulum-specific autophagic process and is essential for the survival of cells subjected to severe ER stress. The ATG8-PE conjugate mediates tethering between adjacent membranes and stimulates membrane hemifusion, leading to expansion of the autophagosomal membrane during autophagy.</text>
</comment>
<comment type="subcellular location">
    <subcellularLocation>
        <location evidence="1">Cytoplasmic vesicle</location>
        <location evidence="1">Autophagosome membrane</location>
        <topology evidence="1">Lipid-anchor</topology>
    </subcellularLocation>
    <subcellularLocation>
        <location evidence="1">Vacuole membrane</location>
        <topology evidence="1">Lipid-anchor</topology>
    </subcellularLocation>
</comment>
<comment type="PTM">
    <text evidence="1">The C-terminal 5 residues are removed by ATG4 to expose Gly-116 at the C-terminus. The c-terminal Gly is then amidated with phosphatidylethanolamine by an activating system similar to that for ubiquitin.</text>
</comment>
<comment type="similarity">
    <text evidence="2">Belongs to the ATG8 family.</text>
</comment>
<keyword id="KW-0072">Autophagy</keyword>
<keyword id="KW-0968">Cytoplasmic vesicle</keyword>
<keyword id="KW-0449">Lipoprotein</keyword>
<keyword id="KW-0472">Membrane</keyword>
<keyword id="KW-0653">Protein transport</keyword>
<keyword id="KW-0813">Transport</keyword>
<keyword id="KW-0833">Ubl conjugation pathway</keyword>
<keyword id="KW-0926">Vacuole</keyword>
<gene>
    <name type="primary">ATG8</name>
</gene>
<accession>A4LA70</accession>